<gene>
    <name type="primary">CASQ2</name>
</gene>
<reference key="1">
    <citation type="submission" date="2004-11" db="EMBL/GenBank/DDBJ databases">
        <authorList>
            <consortium name="The German cDNA consortium"/>
        </authorList>
    </citation>
    <scope>NUCLEOTIDE SEQUENCE [LARGE SCALE MRNA]</scope>
    <source>
        <tissue>Heart</tissue>
    </source>
</reference>
<name>CASQ2_PONAB</name>
<protein>
    <recommendedName>
        <fullName>Calsequestrin-2</fullName>
    </recommendedName>
    <alternativeName>
        <fullName>Calsequestrin, cardiac muscle isoform</fullName>
    </alternativeName>
</protein>
<comment type="function">
    <text evidence="3">Calsequestrin is a high-capacity, moderate affinity, calcium-binding protein and thus acts as an internal calcium store in muscle. Calcium ions are bound by clusters of acidic residues at the protein surface, especially at the interface between subunits. Can bind around 60 Ca(2+) ions. Regulates the release of lumenal Ca(2+) via the calcium release channel RYR2; this plays an important role in triggering muscle contraction. Plays a role in excitation-contraction coupling in the heart and in regulating the rate of heart beats.</text>
</comment>
<comment type="subunit">
    <text evidence="3">Monomer, homodimer and homooligomer. Mostly monomeric in the absence of calcium. Forms higher oligomers in a calcium-dependent manner. Dimers associate to form tetramers, that then form linear homomer chains. Interacts with ASPH and TRDN (By similarity).</text>
</comment>
<comment type="subcellular location">
    <subcellularLocation>
        <location evidence="2">Sarcoplasmic reticulum lumen</location>
    </subcellularLocation>
    <text evidence="2">This isoform of calsequestrin occurs in the sarcoplasmic reticulum's terminal cisternae luminal spaces of cardiac and slow skeletal muscle cells.</text>
</comment>
<comment type="PTM">
    <text evidence="3">Phosphorylation in the C-terminus, probably by CK2, moderately increases calcium buffering capacity.</text>
</comment>
<comment type="PTM">
    <text evidence="3">N-glycosylated.</text>
</comment>
<comment type="similarity">
    <text evidence="6">Belongs to the calsequestrin family.</text>
</comment>
<evidence type="ECO:0000250" key="1"/>
<evidence type="ECO:0000250" key="2">
    <source>
        <dbReference type="UniProtKB" id="O09161"/>
    </source>
</evidence>
<evidence type="ECO:0000250" key="3">
    <source>
        <dbReference type="UniProtKB" id="O14958"/>
    </source>
</evidence>
<evidence type="ECO:0000255" key="4"/>
<evidence type="ECO:0000256" key="5">
    <source>
        <dbReference type="SAM" id="MobiDB-lite"/>
    </source>
</evidence>
<evidence type="ECO:0000305" key="6"/>
<keyword id="KW-0106">Calcium</keyword>
<keyword id="KW-0325">Glycoprotein</keyword>
<keyword id="KW-0479">Metal-binding</keyword>
<keyword id="KW-0514">Muscle protein</keyword>
<keyword id="KW-0597">Phosphoprotein</keyword>
<keyword id="KW-1185">Reference proteome</keyword>
<keyword id="KW-0703">Sarcoplasmic reticulum</keyword>
<keyword id="KW-0732">Signal</keyword>
<sequence length="400" mass="46387">MKRTHLFIVGVYVLSSCRAEEGLNFPTYDGKDRVVSLSEKNFKQVLKKYDLLCLYYHEPVSSDKVAQKQFQLKEIVLELVAQVLEHKAIGFVMVDAKKEAKLAKKLGFDEEGSLYILKGDRTIEFDGEFAADVLVEFLLDLIEDPVEIISSKLEVQAFERIEDYIKLIGFFKSGDSEYYKAFEEAAEHFQPYIKFFATFDKGVAKKLSLKMNEVDFYEPFMDEPIAIPNKPYTEEELVEFVKEHQRPTLRRLRPEEMFETWEDDLNGIHIVAFAEKSDPDGYEFLEILKQVARDNTDNPDLSILWIDPDDFPLLVAYWEKTFKIDLFRPQIGVVNVTDADSVWMEIPDDDDLPTAEELEDWIEDVLSGKINTEDDDDEDDDDDNSDEEDNDDSDDDDDDE</sequence>
<accession>Q5RAN9</accession>
<feature type="signal peptide" evidence="1">
    <location>
        <begin position="1"/>
        <end position="19"/>
    </location>
</feature>
<feature type="chain" id="PRO_0000042644" description="Calsequestrin-2">
    <location>
        <begin position="20"/>
        <end position="400"/>
    </location>
</feature>
<feature type="region of interest" description="Disordered" evidence="5">
    <location>
        <begin position="365"/>
        <end position="400"/>
    </location>
</feature>
<feature type="compositionally biased region" description="Acidic residues" evidence="5">
    <location>
        <begin position="373"/>
        <end position="400"/>
    </location>
</feature>
<feature type="modified residue" description="Phosphotyrosine" evidence="2">
    <location>
        <position position="282"/>
    </location>
</feature>
<feature type="glycosylation site" description="N-linked (GlcNAc...) asparagine" evidence="4">
    <location>
        <position position="335"/>
    </location>
</feature>
<proteinExistence type="evidence at transcript level"/>
<organism>
    <name type="scientific">Pongo abelii</name>
    <name type="common">Sumatran orangutan</name>
    <name type="synonym">Pongo pygmaeus abelii</name>
    <dbReference type="NCBI Taxonomy" id="9601"/>
    <lineage>
        <taxon>Eukaryota</taxon>
        <taxon>Metazoa</taxon>
        <taxon>Chordata</taxon>
        <taxon>Craniata</taxon>
        <taxon>Vertebrata</taxon>
        <taxon>Euteleostomi</taxon>
        <taxon>Mammalia</taxon>
        <taxon>Eutheria</taxon>
        <taxon>Euarchontoglires</taxon>
        <taxon>Primates</taxon>
        <taxon>Haplorrhini</taxon>
        <taxon>Catarrhini</taxon>
        <taxon>Hominidae</taxon>
        <taxon>Pongo</taxon>
    </lineage>
</organism>
<dbReference type="EMBL" id="CR858976">
    <property type="protein sequence ID" value="CAH91171.1"/>
    <property type="molecule type" value="mRNA"/>
</dbReference>
<dbReference type="RefSeq" id="NP_001125686.1">
    <property type="nucleotide sequence ID" value="NM_001132214.1"/>
</dbReference>
<dbReference type="SMR" id="Q5RAN9"/>
<dbReference type="FunCoup" id="Q5RAN9">
    <property type="interactions" value="331"/>
</dbReference>
<dbReference type="STRING" id="9601.ENSPPYP00000001152"/>
<dbReference type="GlyCosmos" id="Q5RAN9">
    <property type="glycosylation" value="1 site, No reported glycans"/>
</dbReference>
<dbReference type="GeneID" id="100172607"/>
<dbReference type="KEGG" id="pon:100172607"/>
<dbReference type="CTD" id="845"/>
<dbReference type="eggNOG" id="ENOG502QU4Q">
    <property type="taxonomic scope" value="Eukaryota"/>
</dbReference>
<dbReference type="InParanoid" id="Q5RAN9"/>
<dbReference type="OrthoDB" id="10038131at2759"/>
<dbReference type="Proteomes" id="UP000001595">
    <property type="component" value="Unplaced"/>
</dbReference>
<dbReference type="GO" id="GO:0033018">
    <property type="term" value="C:sarcoplasmic reticulum lumen"/>
    <property type="evidence" value="ECO:0007669"/>
    <property type="project" value="UniProtKB-SubCell"/>
</dbReference>
<dbReference type="GO" id="GO:0030018">
    <property type="term" value="C:Z disc"/>
    <property type="evidence" value="ECO:0007669"/>
    <property type="project" value="TreeGrafter"/>
</dbReference>
<dbReference type="GO" id="GO:0005509">
    <property type="term" value="F:calcium ion binding"/>
    <property type="evidence" value="ECO:0007669"/>
    <property type="project" value="InterPro"/>
</dbReference>
<dbReference type="GO" id="GO:0010881">
    <property type="term" value="P:regulation of cardiac muscle contraction by regulation of the release of sequestered calcium ion"/>
    <property type="evidence" value="ECO:0007669"/>
    <property type="project" value="TreeGrafter"/>
</dbReference>
<dbReference type="CDD" id="cd03074">
    <property type="entry name" value="PDI_b'_Calsequestrin_C"/>
    <property type="match status" value="1"/>
</dbReference>
<dbReference type="CDD" id="cd03066">
    <property type="entry name" value="PDI_b_Calsequestrin_middle"/>
    <property type="match status" value="1"/>
</dbReference>
<dbReference type="CDD" id="cd03065">
    <property type="entry name" value="PDI_b_Calsequestrin_N"/>
    <property type="match status" value="1"/>
</dbReference>
<dbReference type="FunFam" id="3.40.30.10:FF:000031">
    <property type="entry name" value="Calsequestrin"/>
    <property type="match status" value="1"/>
</dbReference>
<dbReference type="FunFam" id="3.40.30.10:FF:000033">
    <property type="entry name" value="Calsequestrin"/>
    <property type="match status" value="1"/>
</dbReference>
<dbReference type="FunFam" id="3.40.30.10:FF:000047">
    <property type="entry name" value="Calsequestrin"/>
    <property type="match status" value="1"/>
</dbReference>
<dbReference type="Gene3D" id="3.40.30.10">
    <property type="entry name" value="Glutaredoxin"/>
    <property type="match status" value="3"/>
</dbReference>
<dbReference type="InterPro" id="IPR001393">
    <property type="entry name" value="Calsequestrin"/>
</dbReference>
<dbReference type="InterPro" id="IPR041860">
    <property type="entry name" value="Calsequestrin_C"/>
</dbReference>
<dbReference type="InterPro" id="IPR018233">
    <property type="entry name" value="Calsequestrin_CS"/>
</dbReference>
<dbReference type="InterPro" id="IPR041858">
    <property type="entry name" value="Calsequestrin_middle_dom"/>
</dbReference>
<dbReference type="InterPro" id="IPR041859">
    <property type="entry name" value="Calsequestrin_N"/>
</dbReference>
<dbReference type="InterPro" id="IPR036249">
    <property type="entry name" value="Thioredoxin-like_sf"/>
</dbReference>
<dbReference type="PANTHER" id="PTHR10033">
    <property type="entry name" value="CALSEQUESTRIN"/>
    <property type="match status" value="1"/>
</dbReference>
<dbReference type="PANTHER" id="PTHR10033:SF15">
    <property type="entry name" value="CALSEQUESTRIN-2"/>
    <property type="match status" value="1"/>
</dbReference>
<dbReference type="Pfam" id="PF01216">
    <property type="entry name" value="Calsequestrin"/>
    <property type="match status" value="1"/>
</dbReference>
<dbReference type="PRINTS" id="PR00312">
    <property type="entry name" value="CALSEQUESTRN"/>
</dbReference>
<dbReference type="SUPFAM" id="SSF52833">
    <property type="entry name" value="Thioredoxin-like"/>
    <property type="match status" value="3"/>
</dbReference>
<dbReference type="PROSITE" id="PS00863">
    <property type="entry name" value="CALSEQUESTRIN_1"/>
    <property type="match status" value="1"/>
</dbReference>
<dbReference type="PROSITE" id="PS00864">
    <property type="entry name" value="CALSEQUESTRIN_2"/>
    <property type="match status" value="1"/>
</dbReference>